<organismHost>
    <name type="scientific">Ornithodoros</name>
    <name type="common">relapsing fever ticks</name>
    <dbReference type="NCBI Taxonomy" id="6937"/>
</organismHost>
<organismHost>
    <name type="scientific">Phacochoerus aethiopicus</name>
    <name type="common">Warthog</name>
    <dbReference type="NCBI Taxonomy" id="85517"/>
</organismHost>
<organismHost>
    <name type="scientific">Phacochoerus africanus</name>
    <name type="common">Warthog</name>
    <dbReference type="NCBI Taxonomy" id="41426"/>
</organismHost>
<organismHost>
    <name type="scientific">Potamochoerus larvatus</name>
    <name type="common">Bushpig</name>
    <dbReference type="NCBI Taxonomy" id="273792"/>
</organismHost>
<organismHost>
    <name type="scientific">Sus scrofa</name>
    <name type="common">Pig</name>
    <dbReference type="NCBI Taxonomy" id="9823"/>
</organismHost>
<accession>P0CAM7</accession>
<protein>
    <recommendedName>
        <fullName>Uncharacterized protein DP238L</fullName>
    </recommendedName>
</protein>
<dbReference type="EMBL" id="AY261360">
    <property type="status" value="NOT_ANNOTATED_CDS"/>
    <property type="molecule type" value="Genomic_DNA"/>
</dbReference>
<dbReference type="Proteomes" id="UP000000861">
    <property type="component" value="Segment"/>
</dbReference>
<name>VFD38_ASFK5</name>
<keyword id="KW-0244">Early protein</keyword>
<proteinExistence type="inferred from homology"/>
<reference key="1">
    <citation type="submission" date="2003-03" db="EMBL/GenBank/DDBJ databases">
        <title>African swine fever virus genomes.</title>
        <authorList>
            <person name="Kutish G.F."/>
            <person name="Rock D.L."/>
        </authorList>
    </citation>
    <scope>NUCLEOTIDE SEQUENCE [LARGE SCALE GENOMIC DNA]</scope>
</reference>
<comment type="induction">
    <text evidence="2">Expressed in the early phase of the viral replicative cycle.</text>
</comment>
<comment type="similarity">
    <text evidence="2">Belongs to the asfivirus DP238L family.</text>
</comment>
<evidence type="ECO:0000256" key="1">
    <source>
        <dbReference type="SAM" id="MobiDB-lite"/>
    </source>
</evidence>
<evidence type="ECO:0000305" key="2"/>
<organism>
    <name type="scientific">African swine fever virus (isolate Pig/Kenya/KEN-50/1950)</name>
    <name type="common">ASFV</name>
    <dbReference type="NCBI Taxonomy" id="561445"/>
    <lineage>
        <taxon>Viruses</taxon>
        <taxon>Varidnaviria</taxon>
        <taxon>Bamfordvirae</taxon>
        <taxon>Nucleocytoviricota</taxon>
        <taxon>Pokkesviricetes</taxon>
        <taxon>Asfuvirales</taxon>
        <taxon>Asfarviridae</taxon>
        <taxon>Asfivirus</taxon>
        <taxon>African swine fever virus</taxon>
    </lineage>
</organism>
<sequence>MEVARGENIRKRKFFDMDIPLNKGIKPISYKNIGINTLPKNNMSRKILFKDKISRDSISKDSLAKDNLSKSSMLKDDLTRDNSPKNGLIGKKRSAPLDISFQNMNSSMPSSTQKRTKILDEEIEDQSTSNENSPVIVDLTLKPSYMPKISRITEIIHKMKELNMNRIEDALPSNKKRNEYDDAKNILLQTMEMDEEDYEAENVVIEDSPYLNASLSEDDTDSSIVEVETDYSEEEKESMSESESSSDDESYSLYDSF</sequence>
<gene>
    <name type="ordered locus">Ken-158</name>
</gene>
<feature type="chain" id="PRO_0000373762" description="Uncharacterized protein DP238L">
    <location>
        <begin position="1"/>
        <end position="257"/>
    </location>
</feature>
<feature type="region of interest" description="Disordered" evidence="1">
    <location>
        <begin position="74"/>
        <end position="115"/>
    </location>
</feature>
<feature type="region of interest" description="Disordered" evidence="1">
    <location>
        <begin position="209"/>
        <end position="257"/>
    </location>
</feature>
<feature type="compositionally biased region" description="Basic and acidic residues" evidence="1">
    <location>
        <begin position="74"/>
        <end position="83"/>
    </location>
</feature>
<feature type="compositionally biased region" description="Polar residues" evidence="1">
    <location>
        <begin position="100"/>
        <end position="113"/>
    </location>
</feature>
<feature type="compositionally biased region" description="Acidic residues" evidence="1">
    <location>
        <begin position="216"/>
        <end position="236"/>
    </location>
</feature>